<accession>B7MXH4</accession>
<feature type="chain" id="PRO_1000149901" description="UPF0208 membrane protein YfbV">
    <location>
        <begin position="1"/>
        <end position="151"/>
    </location>
</feature>
<feature type="transmembrane region" description="Helical" evidence="1">
    <location>
        <begin position="46"/>
        <end position="65"/>
    </location>
</feature>
<feature type="transmembrane region" description="Helical" evidence="1">
    <location>
        <begin position="69"/>
        <end position="91"/>
    </location>
</feature>
<name>YFBV_ECO81</name>
<sequence>MSTPDNRSVNFFSLFRRGQHYSKTWPLEKRLAPVFVENRVIKMTRYAIRFMPPIAVFTLCWQIALGGQLGPAVATALFALSLPMQGLWWLGKRSVTPLPPAILNWFYEVRGKLQESGQVLAPVEGKPDYQALADTLKRAFKQLDKTFLDDL</sequence>
<comment type="subcellular location">
    <subcellularLocation>
        <location evidence="1">Cell inner membrane</location>
        <topology evidence="1">Multi-pass membrane protein</topology>
    </subcellularLocation>
</comment>
<comment type="similarity">
    <text evidence="1">Belongs to the UPF0208 family.</text>
</comment>
<evidence type="ECO:0000255" key="1">
    <source>
        <dbReference type="HAMAP-Rule" id="MF_01101"/>
    </source>
</evidence>
<protein>
    <recommendedName>
        <fullName evidence="1">UPF0208 membrane protein YfbV</fullName>
    </recommendedName>
</protein>
<dbReference type="EMBL" id="CU928162">
    <property type="protein sequence ID" value="CAR08790.1"/>
    <property type="molecule type" value="Genomic_DNA"/>
</dbReference>
<dbReference type="RefSeq" id="WP_000106627.1">
    <property type="nucleotide sequence ID" value="NC_011745.1"/>
</dbReference>
<dbReference type="GeneID" id="93774879"/>
<dbReference type="KEGG" id="ecq:ECED1_2759"/>
<dbReference type="HOGENOM" id="CLU_128746_0_0_6"/>
<dbReference type="Proteomes" id="UP000000748">
    <property type="component" value="Chromosome"/>
</dbReference>
<dbReference type="GO" id="GO:0005886">
    <property type="term" value="C:plasma membrane"/>
    <property type="evidence" value="ECO:0007669"/>
    <property type="project" value="UniProtKB-SubCell"/>
</dbReference>
<dbReference type="HAMAP" id="MF_01101">
    <property type="entry name" value="UPF0208"/>
    <property type="match status" value="1"/>
</dbReference>
<dbReference type="InterPro" id="IPR007334">
    <property type="entry name" value="UPF0208"/>
</dbReference>
<dbReference type="NCBIfam" id="NF002493">
    <property type="entry name" value="PRK01816.1"/>
    <property type="match status" value="1"/>
</dbReference>
<dbReference type="Pfam" id="PF04217">
    <property type="entry name" value="DUF412"/>
    <property type="match status" value="1"/>
</dbReference>
<reference key="1">
    <citation type="journal article" date="2009" name="PLoS Genet.">
        <title>Organised genome dynamics in the Escherichia coli species results in highly diverse adaptive paths.</title>
        <authorList>
            <person name="Touchon M."/>
            <person name="Hoede C."/>
            <person name="Tenaillon O."/>
            <person name="Barbe V."/>
            <person name="Baeriswyl S."/>
            <person name="Bidet P."/>
            <person name="Bingen E."/>
            <person name="Bonacorsi S."/>
            <person name="Bouchier C."/>
            <person name="Bouvet O."/>
            <person name="Calteau A."/>
            <person name="Chiapello H."/>
            <person name="Clermont O."/>
            <person name="Cruveiller S."/>
            <person name="Danchin A."/>
            <person name="Diard M."/>
            <person name="Dossat C."/>
            <person name="Karoui M.E."/>
            <person name="Frapy E."/>
            <person name="Garry L."/>
            <person name="Ghigo J.M."/>
            <person name="Gilles A.M."/>
            <person name="Johnson J."/>
            <person name="Le Bouguenec C."/>
            <person name="Lescat M."/>
            <person name="Mangenot S."/>
            <person name="Martinez-Jehanne V."/>
            <person name="Matic I."/>
            <person name="Nassif X."/>
            <person name="Oztas S."/>
            <person name="Petit M.A."/>
            <person name="Pichon C."/>
            <person name="Rouy Z."/>
            <person name="Ruf C.S."/>
            <person name="Schneider D."/>
            <person name="Tourret J."/>
            <person name="Vacherie B."/>
            <person name="Vallenet D."/>
            <person name="Medigue C."/>
            <person name="Rocha E.P.C."/>
            <person name="Denamur E."/>
        </authorList>
    </citation>
    <scope>NUCLEOTIDE SEQUENCE [LARGE SCALE GENOMIC DNA]</scope>
    <source>
        <strain>ED1a</strain>
    </source>
</reference>
<proteinExistence type="inferred from homology"/>
<organism>
    <name type="scientific">Escherichia coli O81 (strain ED1a)</name>
    <dbReference type="NCBI Taxonomy" id="585397"/>
    <lineage>
        <taxon>Bacteria</taxon>
        <taxon>Pseudomonadati</taxon>
        <taxon>Pseudomonadota</taxon>
        <taxon>Gammaproteobacteria</taxon>
        <taxon>Enterobacterales</taxon>
        <taxon>Enterobacteriaceae</taxon>
        <taxon>Escherichia</taxon>
    </lineage>
</organism>
<gene>
    <name evidence="1" type="primary">yfbV</name>
    <name type="ordered locus">ECED1_2759</name>
</gene>
<keyword id="KW-0997">Cell inner membrane</keyword>
<keyword id="KW-1003">Cell membrane</keyword>
<keyword id="KW-0472">Membrane</keyword>
<keyword id="KW-0812">Transmembrane</keyword>
<keyword id="KW-1133">Transmembrane helix</keyword>